<organism>
    <name type="scientific">Giardia intestinalis</name>
    <name type="common">Giardia lamblia</name>
    <dbReference type="NCBI Taxonomy" id="5741"/>
    <lineage>
        <taxon>Eukaryota</taxon>
        <taxon>Metamonada</taxon>
        <taxon>Diplomonadida</taxon>
        <taxon>Hexamitidae</taxon>
        <taxon>Giardiinae</taxon>
        <taxon>Giardia</taxon>
    </lineage>
</organism>
<accession>P36187</accession>
<sequence length="257" mass="27851">MPARRPFIGGNFKCNGSLDFIKSHVASIASYKIPESVDVVVAPSFVHLSTAIAANTSKCLKIAAQNVYLEGNGAWTGETSVEMLLDMGLSHVIIGHSERRRIMGETNEQSAKKAKRALDKGMTVIFCTGETLDERKANNTMEVNIAQLEALKKEIGESKKLWENVVIAYEPVWSIGTGVVATPEQAEEVHVGLRKWFAEKVCAEGAQHIRIIYGGSANGSNCEKLGQCPNIDGFLVGGASLKPEFTTMIDILAKTRA</sequence>
<evidence type="ECO:0000250" key="1"/>
<evidence type="ECO:0000305" key="2"/>
<keyword id="KW-0312">Gluconeogenesis</keyword>
<keyword id="KW-0324">Glycolysis</keyword>
<keyword id="KW-0413">Isomerase</keyword>
<comment type="catalytic activity">
    <reaction>
        <text>D-glyceraldehyde 3-phosphate = dihydroxyacetone phosphate</text>
        <dbReference type="Rhea" id="RHEA:18585"/>
        <dbReference type="ChEBI" id="CHEBI:57642"/>
        <dbReference type="ChEBI" id="CHEBI:59776"/>
        <dbReference type="EC" id="5.3.1.1"/>
    </reaction>
</comment>
<comment type="pathway">
    <text>Carbohydrate biosynthesis; gluconeogenesis.</text>
</comment>
<comment type="pathway">
    <text>Carbohydrate degradation; glycolysis; D-glyceraldehyde 3-phosphate from glycerone phosphate: step 1/1.</text>
</comment>
<comment type="subunit">
    <text evidence="1">Homodimer.</text>
</comment>
<comment type="similarity">
    <text evidence="2">Belongs to the triosephosphate isomerase family.</text>
</comment>
<proteinExistence type="inferred from homology"/>
<name>TPI2_GIAIN</name>
<reference key="1">
    <citation type="journal article" date="1994" name="Exp. Parasitol.">
        <title>Complementation of an Escherichia coli glycolysis mutant by Giardia lamblia triosephosphate isomerase.</title>
        <authorList>
            <person name="Mowatt M.R."/>
            <person name="Weinbach E.C."/>
            <person name="Howard T.C."/>
            <person name="Nash T.E."/>
        </authorList>
    </citation>
    <scope>NUCLEOTIDE SEQUENCE</scope>
</reference>
<protein>
    <recommendedName>
        <fullName>Triosephosphate isomerase</fullName>
        <shortName>TIM</shortName>
        <ecNumber>5.3.1.1</ecNumber>
    </recommendedName>
    <alternativeName>
        <fullName>Triose-phosphate isomerase</fullName>
    </alternativeName>
</protein>
<dbReference type="EC" id="5.3.1.1"/>
<dbReference type="EMBL" id="L02116">
    <property type="protein sequence ID" value="AAA18205.1"/>
    <property type="molecule type" value="Unassigned_DNA"/>
</dbReference>
<dbReference type="SMR" id="P36187"/>
<dbReference type="VEuPathDB" id="GiardiaDB:DHA2_93938"/>
<dbReference type="VEuPathDB" id="GiardiaDB:GL50581_1369"/>
<dbReference type="VEuPathDB" id="GiardiaDB:GL50803_0093938"/>
<dbReference type="VEuPathDB" id="GiardiaDB:QR46_3913"/>
<dbReference type="OrthoDB" id="6715177at2759"/>
<dbReference type="UniPathway" id="UPA00109">
    <property type="reaction ID" value="UER00189"/>
</dbReference>
<dbReference type="UniPathway" id="UPA00138"/>
<dbReference type="GO" id="GO:0005829">
    <property type="term" value="C:cytosol"/>
    <property type="evidence" value="ECO:0007669"/>
    <property type="project" value="TreeGrafter"/>
</dbReference>
<dbReference type="GO" id="GO:0004807">
    <property type="term" value="F:triose-phosphate isomerase activity"/>
    <property type="evidence" value="ECO:0007669"/>
    <property type="project" value="UniProtKB-EC"/>
</dbReference>
<dbReference type="GO" id="GO:0006094">
    <property type="term" value="P:gluconeogenesis"/>
    <property type="evidence" value="ECO:0007669"/>
    <property type="project" value="UniProtKB-UniPathway"/>
</dbReference>
<dbReference type="GO" id="GO:0046166">
    <property type="term" value="P:glyceraldehyde-3-phosphate biosynthetic process"/>
    <property type="evidence" value="ECO:0007669"/>
    <property type="project" value="TreeGrafter"/>
</dbReference>
<dbReference type="GO" id="GO:0019563">
    <property type="term" value="P:glycerol catabolic process"/>
    <property type="evidence" value="ECO:0007669"/>
    <property type="project" value="TreeGrafter"/>
</dbReference>
<dbReference type="GO" id="GO:0006096">
    <property type="term" value="P:glycolytic process"/>
    <property type="evidence" value="ECO:0007669"/>
    <property type="project" value="UniProtKB-UniPathway"/>
</dbReference>
<dbReference type="CDD" id="cd00311">
    <property type="entry name" value="TIM"/>
    <property type="match status" value="1"/>
</dbReference>
<dbReference type="FunFam" id="3.20.20.70:FF:000309">
    <property type="entry name" value="Triosephosphate isomerase"/>
    <property type="match status" value="1"/>
</dbReference>
<dbReference type="Gene3D" id="3.20.20.70">
    <property type="entry name" value="Aldolase class I"/>
    <property type="match status" value="1"/>
</dbReference>
<dbReference type="HAMAP" id="MF_00147_B">
    <property type="entry name" value="TIM_B"/>
    <property type="match status" value="1"/>
</dbReference>
<dbReference type="InterPro" id="IPR013785">
    <property type="entry name" value="Aldolase_TIM"/>
</dbReference>
<dbReference type="InterPro" id="IPR035990">
    <property type="entry name" value="TIM_sf"/>
</dbReference>
<dbReference type="InterPro" id="IPR022896">
    <property type="entry name" value="TrioseP_Isoase_bac/euk"/>
</dbReference>
<dbReference type="InterPro" id="IPR000652">
    <property type="entry name" value="Triosephosphate_isomerase"/>
</dbReference>
<dbReference type="InterPro" id="IPR020861">
    <property type="entry name" value="Triosephosphate_isomerase_AS"/>
</dbReference>
<dbReference type="NCBIfam" id="TIGR00419">
    <property type="entry name" value="tim"/>
    <property type="match status" value="1"/>
</dbReference>
<dbReference type="PANTHER" id="PTHR21139">
    <property type="entry name" value="TRIOSEPHOSPHATE ISOMERASE"/>
    <property type="match status" value="1"/>
</dbReference>
<dbReference type="PANTHER" id="PTHR21139:SF2">
    <property type="entry name" value="TRIOSEPHOSPHATE ISOMERASE"/>
    <property type="match status" value="1"/>
</dbReference>
<dbReference type="Pfam" id="PF00121">
    <property type="entry name" value="TIM"/>
    <property type="match status" value="1"/>
</dbReference>
<dbReference type="SUPFAM" id="SSF51351">
    <property type="entry name" value="Triosephosphate isomerase (TIM)"/>
    <property type="match status" value="1"/>
</dbReference>
<dbReference type="PROSITE" id="PS00171">
    <property type="entry name" value="TIM_1"/>
    <property type="match status" value="1"/>
</dbReference>
<dbReference type="PROSITE" id="PS51440">
    <property type="entry name" value="TIM_2"/>
    <property type="match status" value="1"/>
</dbReference>
<feature type="chain" id="PRO_0000090136" description="Triosephosphate isomerase">
    <location>
        <begin position="1"/>
        <end position="257"/>
    </location>
</feature>
<feature type="active site" description="Electrophile" evidence="1">
    <location>
        <position position="96"/>
    </location>
</feature>
<feature type="active site" description="Proton acceptor" evidence="1">
    <location>
        <position position="170"/>
    </location>
</feature>
<feature type="binding site" evidence="1">
    <location>
        <position position="11"/>
    </location>
    <ligand>
        <name>substrate</name>
    </ligand>
</feature>
<feature type="binding site" evidence="1">
    <location>
        <position position="13"/>
    </location>
    <ligand>
        <name>substrate</name>
    </ligand>
</feature>